<evidence type="ECO:0000305" key="1"/>
<organism>
    <name type="scientific">Arabidopsis thaliana</name>
    <name type="common">Mouse-ear cress</name>
    <dbReference type="NCBI Taxonomy" id="3702"/>
    <lineage>
        <taxon>Eukaryota</taxon>
        <taxon>Viridiplantae</taxon>
        <taxon>Streptophyta</taxon>
        <taxon>Embryophyta</taxon>
        <taxon>Tracheophyta</taxon>
        <taxon>Spermatophyta</taxon>
        <taxon>Magnoliopsida</taxon>
        <taxon>eudicotyledons</taxon>
        <taxon>Gunneridae</taxon>
        <taxon>Pentapetalae</taxon>
        <taxon>rosids</taxon>
        <taxon>malvids</taxon>
        <taxon>Brassicales</taxon>
        <taxon>Brassicaceae</taxon>
        <taxon>Camelineae</taxon>
        <taxon>Arabidopsis</taxon>
    </lineage>
</organism>
<name>TPS3_ARATH</name>
<keyword id="KW-0328">Glycosyltransferase</keyword>
<keyword id="KW-1185">Reference proteome</keyword>
<keyword id="KW-0808">Transferase</keyword>
<comment type="catalytic activity">
    <reaction>
        <text>D-glucose 6-phosphate + UDP-alpha-D-glucose = alpha,alpha-trehalose 6-phosphate + UDP + H(+)</text>
        <dbReference type="Rhea" id="RHEA:18889"/>
        <dbReference type="ChEBI" id="CHEBI:15378"/>
        <dbReference type="ChEBI" id="CHEBI:58223"/>
        <dbReference type="ChEBI" id="CHEBI:58429"/>
        <dbReference type="ChEBI" id="CHEBI:58885"/>
        <dbReference type="ChEBI" id="CHEBI:61548"/>
        <dbReference type="EC" id="2.4.1.15"/>
    </reaction>
</comment>
<comment type="similarity">
    <text evidence="1">In the N-terminal section; belongs to the glycosyltransferase 20 family.</text>
</comment>
<comment type="similarity">
    <text evidence="1">In the C-terminal section; belongs to the trehalose phosphatase family.</text>
</comment>
<comment type="sequence caution" evidence="1">
    <conflict type="erroneous gene model prediction">
        <sequence resource="EMBL-CDS" id="AAD50035"/>
    </conflict>
</comment>
<proteinExistence type="inferred from homology"/>
<dbReference type="EC" id="2.4.1.15"/>
<dbReference type="EMBL" id="AC007651">
    <property type="protein sequence ID" value="AAD50035.1"/>
    <property type="status" value="ALT_SEQ"/>
    <property type="molecule type" value="Genomic_DNA"/>
</dbReference>
<dbReference type="EMBL" id="CP002684">
    <property type="protein sequence ID" value="AEE29529.1"/>
    <property type="molecule type" value="Genomic_DNA"/>
</dbReference>
<dbReference type="PIR" id="F86305">
    <property type="entry name" value="F86305"/>
</dbReference>
<dbReference type="RefSeq" id="NP_173143.4">
    <property type="nucleotide sequence ID" value="NM_101560.5"/>
</dbReference>
<dbReference type="SMR" id="Q9SHG0"/>
<dbReference type="FunCoup" id="Q9SHG0">
    <property type="interactions" value="867"/>
</dbReference>
<dbReference type="STRING" id="3702.Q9SHG0"/>
<dbReference type="CAZy" id="GT20">
    <property type="family name" value="Glycosyltransferase Family 20"/>
</dbReference>
<dbReference type="PaxDb" id="3702-AT1G17000.1"/>
<dbReference type="ProteomicsDB" id="228383"/>
<dbReference type="GeneID" id="838270"/>
<dbReference type="KEGG" id="ath:AT1G17000"/>
<dbReference type="Araport" id="AT1G17000"/>
<dbReference type="TAIR" id="AT1G17000"/>
<dbReference type="eggNOG" id="KOG1050">
    <property type="taxonomic scope" value="Eukaryota"/>
</dbReference>
<dbReference type="HOGENOM" id="CLU_358125_0_0_1"/>
<dbReference type="InParanoid" id="Q9SHG0"/>
<dbReference type="PRO" id="PR:Q9SHG0"/>
<dbReference type="Proteomes" id="UP000006548">
    <property type="component" value="Chromosome 1"/>
</dbReference>
<dbReference type="ExpressionAtlas" id="Q9SHG0">
    <property type="expression patterns" value="baseline and differential"/>
</dbReference>
<dbReference type="GO" id="GO:0003825">
    <property type="term" value="F:alpha,alpha-trehalose-phosphate synthase (UDP-forming) activity"/>
    <property type="evidence" value="ECO:0000318"/>
    <property type="project" value="GO_Central"/>
</dbReference>
<dbReference type="GO" id="GO:0005992">
    <property type="term" value="P:trehalose biosynthetic process"/>
    <property type="evidence" value="ECO:0000318"/>
    <property type="project" value="GO_Central"/>
</dbReference>
<dbReference type="CDD" id="cd03788">
    <property type="entry name" value="GT20_TPS"/>
    <property type="match status" value="1"/>
</dbReference>
<dbReference type="CDD" id="cd01627">
    <property type="entry name" value="HAD_TPP"/>
    <property type="match status" value="1"/>
</dbReference>
<dbReference type="FunFam" id="3.40.50.1000:FF:000100">
    <property type="entry name" value="Alpha,alpha-trehalose-phosphate synthase"/>
    <property type="match status" value="1"/>
</dbReference>
<dbReference type="FunFam" id="3.40.50.2000:FF:000046">
    <property type="entry name" value="alpha,alpha-trehalose-phosphate synthase [UDP-forming] 1"/>
    <property type="match status" value="1"/>
</dbReference>
<dbReference type="FunFam" id="3.40.50.2000:FF:000039">
    <property type="entry name" value="alpha,alpha-trehalose-phosphate synthase [UDP-forming] 1-like"/>
    <property type="match status" value="1"/>
</dbReference>
<dbReference type="Gene3D" id="3.40.50.2000">
    <property type="entry name" value="Glycogen Phosphorylase B"/>
    <property type="match status" value="2"/>
</dbReference>
<dbReference type="InterPro" id="IPR001830">
    <property type="entry name" value="Glyco_trans_20"/>
</dbReference>
<dbReference type="InterPro" id="IPR036412">
    <property type="entry name" value="HAD-like_sf"/>
</dbReference>
<dbReference type="InterPro" id="IPR003337">
    <property type="entry name" value="Trehalose_PPase"/>
</dbReference>
<dbReference type="PANTHER" id="PTHR10788:SF83">
    <property type="entry name" value="ALPHA,ALPHA-TREHALOSE-PHOSPHATE SYNTHASE [UDP-FORMING] 3-RELATED"/>
    <property type="match status" value="1"/>
</dbReference>
<dbReference type="PANTHER" id="PTHR10788">
    <property type="entry name" value="TREHALOSE-6-PHOSPHATE SYNTHASE"/>
    <property type="match status" value="1"/>
</dbReference>
<dbReference type="Pfam" id="PF00982">
    <property type="entry name" value="Glyco_transf_20"/>
    <property type="match status" value="1"/>
</dbReference>
<dbReference type="Pfam" id="PF02358">
    <property type="entry name" value="Trehalose_PPase"/>
    <property type="match status" value="1"/>
</dbReference>
<dbReference type="SUPFAM" id="SSF56784">
    <property type="entry name" value="HAD-like"/>
    <property type="match status" value="1"/>
</dbReference>
<dbReference type="SUPFAM" id="SSF53756">
    <property type="entry name" value="UDP-Glycosyltransferase/glycogen phosphorylase"/>
    <property type="match status" value="1"/>
</dbReference>
<protein>
    <recommendedName>
        <fullName>Probable alpha,alpha-trehalose-phosphate synthase [UDP-forming] 3</fullName>
        <ecNumber>2.4.1.15</ecNumber>
    </recommendedName>
    <alternativeName>
        <fullName>Trehalose-6-phosphate synthase 3</fullName>
        <shortName>AtTPS3</shortName>
    </alternativeName>
</protein>
<reference key="1">
    <citation type="journal article" date="2000" name="Nature">
        <title>Sequence and analysis of chromosome 1 of the plant Arabidopsis thaliana.</title>
        <authorList>
            <person name="Theologis A."/>
            <person name="Ecker J.R."/>
            <person name="Palm C.J."/>
            <person name="Federspiel N.A."/>
            <person name="Kaul S."/>
            <person name="White O."/>
            <person name="Alonso J."/>
            <person name="Altafi H."/>
            <person name="Araujo R."/>
            <person name="Bowman C.L."/>
            <person name="Brooks S.Y."/>
            <person name="Buehler E."/>
            <person name="Chan A."/>
            <person name="Chao Q."/>
            <person name="Chen H."/>
            <person name="Cheuk R.F."/>
            <person name="Chin C.W."/>
            <person name="Chung M.K."/>
            <person name="Conn L."/>
            <person name="Conway A.B."/>
            <person name="Conway A.R."/>
            <person name="Creasy T.H."/>
            <person name="Dewar K."/>
            <person name="Dunn P."/>
            <person name="Etgu P."/>
            <person name="Feldblyum T.V."/>
            <person name="Feng J.-D."/>
            <person name="Fong B."/>
            <person name="Fujii C.Y."/>
            <person name="Gill J.E."/>
            <person name="Goldsmith A.D."/>
            <person name="Haas B."/>
            <person name="Hansen N.F."/>
            <person name="Hughes B."/>
            <person name="Huizar L."/>
            <person name="Hunter J.L."/>
            <person name="Jenkins J."/>
            <person name="Johnson-Hopson C."/>
            <person name="Khan S."/>
            <person name="Khaykin E."/>
            <person name="Kim C.J."/>
            <person name="Koo H.L."/>
            <person name="Kremenetskaia I."/>
            <person name="Kurtz D.B."/>
            <person name="Kwan A."/>
            <person name="Lam B."/>
            <person name="Langin-Hooper S."/>
            <person name="Lee A."/>
            <person name="Lee J.M."/>
            <person name="Lenz C.A."/>
            <person name="Li J.H."/>
            <person name="Li Y.-P."/>
            <person name="Lin X."/>
            <person name="Liu S.X."/>
            <person name="Liu Z.A."/>
            <person name="Luros J.S."/>
            <person name="Maiti R."/>
            <person name="Marziali A."/>
            <person name="Militscher J."/>
            <person name="Miranda M."/>
            <person name="Nguyen M."/>
            <person name="Nierman W.C."/>
            <person name="Osborne B.I."/>
            <person name="Pai G."/>
            <person name="Peterson J."/>
            <person name="Pham P.K."/>
            <person name="Rizzo M."/>
            <person name="Rooney T."/>
            <person name="Rowley D."/>
            <person name="Sakano H."/>
            <person name="Salzberg S.L."/>
            <person name="Schwartz J.R."/>
            <person name="Shinn P."/>
            <person name="Southwick A.M."/>
            <person name="Sun H."/>
            <person name="Tallon L.J."/>
            <person name="Tambunga G."/>
            <person name="Toriumi M.J."/>
            <person name="Town C.D."/>
            <person name="Utterback T."/>
            <person name="Van Aken S."/>
            <person name="Vaysberg M."/>
            <person name="Vysotskaia V.S."/>
            <person name="Walker M."/>
            <person name="Wu D."/>
            <person name="Yu G."/>
            <person name="Fraser C.M."/>
            <person name="Venter J.C."/>
            <person name="Davis R.W."/>
        </authorList>
    </citation>
    <scope>NUCLEOTIDE SEQUENCE [LARGE SCALE GENOMIC DNA]</scope>
    <source>
        <strain>cv. Columbia</strain>
    </source>
</reference>
<reference key="2">
    <citation type="journal article" date="2017" name="Plant J.">
        <title>Araport11: a complete reannotation of the Arabidopsis thaliana reference genome.</title>
        <authorList>
            <person name="Cheng C.Y."/>
            <person name="Krishnakumar V."/>
            <person name="Chan A.P."/>
            <person name="Thibaud-Nissen F."/>
            <person name="Schobel S."/>
            <person name="Town C.D."/>
        </authorList>
    </citation>
    <scope>GENOME REANNOTATION</scope>
    <source>
        <strain>cv. Columbia</strain>
    </source>
</reference>
<reference key="3">
    <citation type="journal article" date="2001" name="Trends Plant Sci.">
        <title>An unexpected plethora of trehalose biosynthesis genes in Arabidopsis thaliana.</title>
        <authorList>
            <person name="Leyman B."/>
            <person name="Van Dijck P."/>
            <person name="Thevelein J.M."/>
        </authorList>
    </citation>
    <scope>GENE FAMILY</scope>
    <scope>NOMENCLATURE</scope>
</reference>
<gene>
    <name type="primary">TPS3</name>
    <name type="ordered locus">At1g17000</name>
    <name type="ORF">F20D23.30</name>
</gene>
<accession>Q9SHG0</accession>
<accession>F4I628</accession>
<feature type="chain" id="PRO_0000324824" description="Probable alpha,alpha-trehalose-phosphate synthase [UDP-forming] 3">
    <location>
        <begin position="1"/>
        <end position="783"/>
    </location>
</feature>
<feature type="region of interest" description="Glycosyltransferase">
    <location>
        <begin position="11"/>
        <end position="456"/>
    </location>
</feature>
<sequence>MGYDNVCGERQTLLVVANRLPASAKRTGEHSWSLEMSPGGKFNLLVEKDAVSKSLAEMKCIPVFLNEVFDQYYNGYSNGILWPILHHMGLPQEYDHDTIKTFETQYDAYKKANRMFLDVIKENYKDGDIVWCQDYHLMFLPQYLKEYNNKIKVGWFLHSPFPSSEIYKTLPSRSELLRSVLAADLISFHTYDFARHFVNTCTRILGVEGTHEGVVYQGRVTRVVVLPMGIYPNRFIKTCKLPEVIQQMNELKDRFSGKKVILGVDRLDMIKGIPQKYLGFEKFLDENPNWRDKIVLVQIAVPTRNEVPEYQKLKNQVHRLVGRINGRFGSVSSLPIHHMDCSVDSNYLCALYAISDVMLVTSLRDGLNLVSHEFVACQEAKRGVLILSEFAGAGQSLGAGALLVNPWNVTEVSSAIKKALNMPYEERETRHRVNFKYVKTHSAEKWGFDFLSELNDAFDESELQIRKIPHELPQQDVIQRYSLSNNRLIILGFYGTITEPRNSLSKEMDLKLNPELKETLKALCNDPKTTVVVLSRSGKNILDKNFGEYKIWLAAENGMFLKHTTEEWVTNMPQNMNLDWVDGLKNVFKYFTDRTPRSFFEASKTSLVWNYEYADVEFGRAQARDLLQYLWAGPISNASAEVVRGKYSVEVHAIGVTKEPEIGHILGEIVHKKAMTTPIDYVFCSGYFLEKDEDIYTFFESEILSPKLSHETRSKSSSSNHSLEKKVSLNVLDLKQENYFSTAIGQARTKARYVVDSSHNVVNLLHKLAVANTTTTSVKKPNV</sequence>